<evidence type="ECO:0000255" key="1">
    <source>
        <dbReference type="HAMAP-Rule" id="MF_00185"/>
    </source>
</evidence>
<organism>
    <name type="scientific">Yersinia pestis</name>
    <dbReference type="NCBI Taxonomy" id="632"/>
    <lineage>
        <taxon>Bacteria</taxon>
        <taxon>Pseudomonadati</taxon>
        <taxon>Pseudomonadota</taxon>
        <taxon>Gammaproteobacteria</taxon>
        <taxon>Enterobacterales</taxon>
        <taxon>Yersiniaceae</taxon>
        <taxon>Yersinia</taxon>
    </lineage>
</organism>
<reference key="1">
    <citation type="journal article" date="2001" name="Nature">
        <title>Genome sequence of Yersinia pestis, the causative agent of plague.</title>
        <authorList>
            <person name="Parkhill J."/>
            <person name="Wren B.W."/>
            <person name="Thomson N.R."/>
            <person name="Titball R.W."/>
            <person name="Holden M.T.G."/>
            <person name="Prentice M.B."/>
            <person name="Sebaihia M."/>
            <person name="James K.D."/>
            <person name="Churcher C.M."/>
            <person name="Mungall K.L."/>
            <person name="Baker S."/>
            <person name="Basham D."/>
            <person name="Bentley S.D."/>
            <person name="Brooks K."/>
            <person name="Cerdeno-Tarraga A.-M."/>
            <person name="Chillingworth T."/>
            <person name="Cronin A."/>
            <person name="Davies R.M."/>
            <person name="Davis P."/>
            <person name="Dougan G."/>
            <person name="Feltwell T."/>
            <person name="Hamlin N."/>
            <person name="Holroyd S."/>
            <person name="Jagels K."/>
            <person name="Karlyshev A.V."/>
            <person name="Leather S."/>
            <person name="Moule S."/>
            <person name="Oyston P.C.F."/>
            <person name="Quail M.A."/>
            <person name="Rutherford K.M."/>
            <person name="Simmonds M."/>
            <person name="Skelton J."/>
            <person name="Stevens K."/>
            <person name="Whitehead S."/>
            <person name="Barrell B.G."/>
        </authorList>
    </citation>
    <scope>NUCLEOTIDE SEQUENCE [LARGE SCALE GENOMIC DNA]</scope>
    <source>
        <strain>CO-92 / Biovar Orientalis</strain>
    </source>
</reference>
<reference key="2">
    <citation type="journal article" date="2002" name="J. Bacteriol.">
        <title>Genome sequence of Yersinia pestis KIM.</title>
        <authorList>
            <person name="Deng W."/>
            <person name="Burland V."/>
            <person name="Plunkett G. III"/>
            <person name="Boutin A."/>
            <person name="Mayhew G.F."/>
            <person name="Liss P."/>
            <person name="Perna N.T."/>
            <person name="Rose D.J."/>
            <person name="Mau B."/>
            <person name="Zhou S."/>
            <person name="Schwartz D.C."/>
            <person name="Fetherston J.D."/>
            <person name="Lindler L.E."/>
            <person name="Brubaker R.R."/>
            <person name="Plano G.V."/>
            <person name="Straley S.C."/>
            <person name="McDonough K.A."/>
            <person name="Nilles M.L."/>
            <person name="Matson J.S."/>
            <person name="Blattner F.R."/>
            <person name="Perry R.D."/>
        </authorList>
    </citation>
    <scope>NUCLEOTIDE SEQUENCE [LARGE SCALE GENOMIC DNA]</scope>
    <source>
        <strain>KIM10+ / Biovar Mediaevalis</strain>
    </source>
</reference>
<reference key="3">
    <citation type="journal article" date="2004" name="DNA Res.">
        <title>Complete genome sequence of Yersinia pestis strain 91001, an isolate avirulent to humans.</title>
        <authorList>
            <person name="Song Y."/>
            <person name="Tong Z."/>
            <person name="Wang J."/>
            <person name="Wang L."/>
            <person name="Guo Z."/>
            <person name="Han Y."/>
            <person name="Zhang J."/>
            <person name="Pei D."/>
            <person name="Zhou D."/>
            <person name="Qin H."/>
            <person name="Pang X."/>
            <person name="Han Y."/>
            <person name="Zhai J."/>
            <person name="Li M."/>
            <person name="Cui B."/>
            <person name="Qi Z."/>
            <person name="Jin L."/>
            <person name="Dai R."/>
            <person name="Chen F."/>
            <person name="Li S."/>
            <person name="Ye C."/>
            <person name="Du Z."/>
            <person name="Lin W."/>
            <person name="Wang J."/>
            <person name="Yu J."/>
            <person name="Yang H."/>
            <person name="Wang J."/>
            <person name="Huang P."/>
            <person name="Yang R."/>
        </authorList>
    </citation>
    <scope>NUCLEOTIDE SEQUENCE [LARGE SCALE GENOMIC DNA]</scope>
    <source>
        <strain>91001 / Biovar Mediaevalis</strain>
    </source>
</reference>
<gene>
    <name evidence="1" type="primary">miaA</name>
    <name type="ordered locus">YPO0372</name>
    <name type="ordered locus">y0629</name>
    <name type="ordered locus">YP_0528</name>
</gene>
<comment type="function">
    <text evidence="1">Catalyzes the transfer of a dimethylallyl group onto the adenine at position 37 in tRNAs that read codons beginning with uridine, leading to the formation of N6-(dimethylallyl)adenosine (i(6)A).</text>
</comment>
<comment type="catalytic activity">
    <reaction evidence="1">
        <text>adenosine(37) in tRNA + dimethylallyl diphosphate = N(6)-dimethylallyladenosine(37) in tRNA + diphosphate</text>
        <dbReference type="Rhea" id="RHEA:26482"/>
        <dbReference type="Rhea" id="RHEA-COMP:10162"/>
        <dbReference type="Rhea" id="RHEA-COMP:10375"/>
        <dbReference type="ChEBI" id="CHEBI:33019"/>
        <dbReference type="ChEBI" id="CHEBI:57623"/>
        <dbReference type="ChEBI" id="CHEBI:74411"/>
        <dbReference type="ChEBI" id="CHEBI:74415"/>
        <dbReference type="EC" id="2.5.1.75"/>
    </reaction>
</comment>
<comment type="cofactor">
    <cofactor evidence="1">
        <name>Mg(2+)</name>
        <dbReference type="ChEBI" id="CHEBI:18420"/>
    </cofactor>
</comment>
<comment type="subunit">
    <text evidence="1">Monomer.</text>
</comment>
<comment type="similarity">
    <text evidence="1">Belongs to the IPP transferase family.</text>
</comment>
<proteinExistence type="inferred from homology"/>
<dbReference type="EC" id="2.5.1.75" evidence="1"/>
<dbReference type="EMBL" id="AL590842">
    <property type="protein sequence ID" value="CAL19054.1"/>
    <property type="molecule type" value="Genomic_DNA"/>
</dbReference>
<dbReference type="EMBL" id="AE009952">
    <property type="protein sequence ID" value="AAM84217.1"/>
    <property type="molecule type" value="Genomic_DNA"/>
</dbReference>
<dbReference type="EMBL" id="AE017042">
    <property type="protein sequence ID" value="AAS60798.1"/>
    <property type="molecule type" value="Genomic_DNA"/>
</dbReference>
<dbReference type="PIR" id="AD0046">
    <property type="entry name" value="AD0046"/>
</dbReference>
<dbReference type="RefSeq" id="WP_002209149.1">
    <property type="nucleotide sequence ID" value="NZ_WUCM01000083.1"/>
</dbReference>
<dbReference type="RefSeq" id="YP_002345450.1">
    <property type="nucleotide sequence ID" value="NC_003143.1"/>
</dbReference>
<dbReference type="SMR" id="Q8ZIW3"/>
<dbReference type="STRING" id="214092.YPO0372"/>
<dbReference type="PaxDb" id="214092-YPO0372"/>
<dbReference type="DNASU" id="1145576"/>
<dbReference type="EnsemblBacteria" id="AAS60798">
    <property type="protein sequence ID" value="AAS60798"/>
    <property type="gene ID" value="YP_0528"/>
</dbReference>
<dbReference type="GeneID" id="57974235"/>
<dbReference type="KEGG" id="ype:YPO0372"/>
<dbReference type="KEGG" id="ypk:y0629"/>
<dbReference type="KEGG" id="ypm:YP_0528"/>
<dbReference type="PATRIC" id="fig|214092.21.peg.609"/>
<dbReference type="eggNOG" id="COG0324">
    <property type="taxonomic scope" value="Bacteria"/>
</dbReference>
<dbReference type="HOGENOM" id="CLU_032616_0_0_6"/>
<dbReference type="OMA" id="VPHYLID"/>
<dbReference type="OrthoDB" id="9776390at2"/>
<dbReference type="Proteomes" id="UP000000815">
    <property type="component" value="Chromosome"/>
</dbReference>
<dbReference type="Proteomes" id="UP000001019">
    <property type="component" value="Chromosome"/>
</dbReference>
<dbReference type="Proteomes" id="UP000002490">
    <property type="component" value="Chromosome"/>
</dbReference>
<dbReference type="GO" id="GO:0005524">
    <property type="term" value="F:ATP binding"/>
    <property type="evidence" value="ECO:0007669"/>
    <property type="project" value="UniProtKB-UniRule"/>
</dbReference>
<dbReference type="GO" id="GO:0052381">
    <property type="term" value="F:tRNA dimethylallyltransferase activity"/>
    <property type="evidence" value="ECO:0000318"/>
    <property type="project" value="GO_Central"/>
</dbReference>
<dbReference type="GO" id="GO:0006400">
    <property type="term" value="P:tRNA modification"/>
    <property type="evidence" value="ECO:0000318"/>
    <property type="project" value="GO_Central"/>
</dbReference>
<dbReference type="FunFam" id="1.10.20.140:FF:000001">
    <property type="entry name" value="tRNA dimethylallyltransferase"/>
    <property type="match status" value="1"/>
</dbReference>
<dbReference type="Gene3D" id="1.10.20.140">
    <property type="match status" value="1"/>
</dbReference>
<dbReference type="Gene3D" id="3.40.50.300">
    <property type="entry name" value="P-loop containing nucleotide triphosphate hydrolases"/>
    <property type="match status" value="1"/>
</dbReference>
<dbReference type="HAMAP" id="MF_00185">
    <property type="entry name" value="IPP_trans"/>
    <property type="match status" value="1"/>
</dbReference>
<dbReference type="InterPro" id="IPR039657">
    <property type="entry name" value="Dimethylallyltransferase"/>
</dbReference>
<dbReference type="InterPro" id="IPR018022">
    <property type="entry name" value="IPT"/>
</dbReference>
<dbReference type="InterPro" id="IPR027417">
    <property type="entry name" value="P-loop_NTPase"/>
</dbReference>
<dbReference type="NCBIfam" id="TIGR00174">
    <property type="entry name" value="miaA"/>
    <property type="match status" value="1"/>
</dbReference>
<dbReference type="PANTHER" id="PTHR11088">
    <property type="entry name" value="TRNA DIMETHYLALLYLTRANSFERASE"/>
    <property type="match status" value="1"/>
</dbReference>
<dbReference type="PANTHER" id="PTHR11088:SF60">
    <property type="entry name" value="TRNA DIMETHYLALLYLTRANSFERASE"/>
    <property type="match status" value="1"/>
</dbReference>
<dbReference type="Pfam" id="PF01715">
    <property type="entry name" value="IPPT"/>
    <property type="match status" value="1"/>
</dbReference>
<dbReference type="SUPFAM" id="SSF52540">
    <property type="entry name" value="P-loop containing nucleoside triphosphate hydrolases"/>
    <property type="match status" value="1"/>
</dbReference>
<keyword id="KW-0067">ATP-binding</keyword>
<keyword id="KW-0460">Magnesium</keyword>
<keyword id="KW-0547">Nucleotide-binding</keyword>
<keyword id="KW-1185">Reference proteome</keyword>
<keyword id="KW-0808">Transferase</keyword>
<keyword id="KW-0819">tRNA processing</keyword>
<feature type="chain" id="PRO_0000164011" description="tRNA dimethylallyltransferase">
    <location>
        <begin position="1"/>
        <end position="313"/>
    </location>
</feature>
<feature type="region of interest" description="Interaction with substrate tRNA" evidence="1">
    <location>
        <begin position="42"/>
        <end position="45"/>
    </location>
</feature>
<feature type="region of interest" description="Interaction with substrate tRNA" evidence="1">
    <location>
        <begin position="166"/>
        <end position="170"/>
    </location>
</feature>
<feature type="region of interest" description="Interaction with substrate tRNA" evidence="1">
    <location>
        <begin position="247"/>
        <end position="252"/>
    </location>
</feature>
<feature type="binding site" evidence="1">
    <location>
        <begin position="17"/>
        <end position="24"/>
    </location>
    <ligand>
        <name>ATP</name>
        <dbReference type="ChEBI" id="CHEBI:30616"/>
    </ligand>
</feature>
<feature type="binding site" evidence="1">
    <location>
        <begin position="19"/>
        <end position="24"/>
    </location>
    <ligand>
        <name>substrate</name>
    </ligand>
</feature>
<feature type="site" description="Interaction with substrate tRNA" evidence="1">
    <location>
        <position position="108"/>
    </location>
</feature>
<feature type="site" description="Interaction with substrate tRNA" evidence="1">
    <location>
        <position position="130"/>
    </location>
</feature>
<accession>Q8ZIW3</accession>
<accession>Q0WJT8</accession>
<name>MIAA_YERPE</name>
<sequence>MNDIENLDRPPAIFIMGPTASGKTALSIALRQRLPVELVSVDSALIYRGMDIGTAKPSAQELALAPHRLIDIRDPAESYSAADFRKDALKEMADITAAGRIPLLVGGTMLYFKALLDGLSPLPSADPQVRQRIEQQASELGWGALHQQLAVIDPVAAARIHPNDPQRLSRALEVFFISGKTLTELTKISGETLPYRVHQFAIAPASRELLHQRIELRFHQMLDAGFEAEARVLFDRGDLHTDLPAIRCVGYRQMWSYLSGEIDYNDMVYRGVCATRQLAKRQMTWLRGWSSVQWLDSDKPGEALDSVIQVVSA</sequence>
<protein>
    <recommendedName>
        <fullName evidence="1">tRNA dimethylallyltransferase</fullName>
        <ecNumber evidence="1">2.5.1.75</ecNumber>
    </recommendedName>
    <alternativeName>
        <fullName evidence="1">Dimethylallyl diphosphate:tRNA dimethylallyltransferase</fullName>
        <shortName evidence="1">DMAPP:tRNA dimethylallyltransferase</shortName>
        <shortName evidence="1">DMATase</shortName>
    </alternativeName>
    <alternativeName>
        <fullName evidence="1">Isopentenyl-diphosphate:tRNA isopentenyltransferase</fullName>
        <shortName evidence="1">IPP transferase</shortName>
        <shortName evidence="1">IPPT</shortName>
        <shortName evidence="1">IPTase</shortName>
    </alternativeName>
</protein>